<feature type="chain" id="PRO_0000221674" description="Virulence protein VsdF">
    <location>
        <begin position="1"/>
        <end position="119"/>
    </location>
</feature>
<sequence length="119" mass="13934">MLRATKVCIYPTPEQAEHLNAQFGAVRFVYSKSLHIKKHAYQRHGVSLTPRKDIKPLLAVAKKFRKFRKFRKYAWLKEYDSIALQQAVINLDVAFSNCFNPKLKARFPMFKRKHGKLLG</sequence>
<protein>
    <recommendedName>
        <fullName>Virulence protein VsdF</fullName>
    </recommendedName>
</protein>
<dbReference type="EMBL" id="X56727">
    <property type="protein sequence ID" value="CAA40052.1"/>
    <property type="molecule type" value="Genomic_DNA"/>
</dbReference>
<dbReference type="SMR" id="P24421"/>
<dbReference type="InterPro" id="IPR021027">
    <property type="entry name" value="Transposase_put_HTH"/>
</dbReference>
<dbReference type="Pfam" id="PF12323">
    <property type="entry name" value="HTH_OrfB_IS605"/>
    <property type="match status" value="1"/>
</dbReference>
<accession>P24421</accession>
<reference key="1">
    <citation type="journal article" date="1991" name="Mol. Microbiol.">
        <title>Molecular analysis of the virulence locus of the Salmonella dublin plasmid pSDL2.</title>
        <authorList>
            <person name="Krause M."/>
            <person name="Roudier C."/>
            <person name="Fierer J."/>
            <person name="Harwood J."/>
            <person name="Guiney D."/>
        </authorList>
    </citation>
    <scope>NUCLEOTIDE SEQUENCE [GENOMIC DNA]</scope>
    <source>
        <strain>Lane</strain>
    </source>
</reference>
<comment type="function">
    <text>Expressed but non-essential protein, involved in the virulence of Salmonellas.</text>
</comment>
<comment type="miscellaneous">
    <text>In Salmonella spp. the spv gene cluster is encoded on a highly transmissible plasmid.</text>
</comment>
<proteinExistence type="predicted"/>
<keyword id="KW-0614">Plasmid</keyword>
<keyword id="KW-0843">Virulence</keyword>
<organism>
    <name type="scientific">Salmonella dublin</name>
    <dbReference type="NCBI Taxonomy" id="98360"/>
    <lineage>
        <taxon>Bacteria</taxon>
        <taxon>Pseudomonadati</taxon>
        <taxon>Pseudomonadota</taxon>
        <taxon>Gammaproteobacteria</taxon>
        <taxon>Enterobacterales</taxon>
        <taxon>Enterobacteriaceae</taxon>
        <taxon>Salmonella</taxon>
    </lineage>
</organism>
<name>VSDF_SALDU</name>
<gene>
    <name type="primary">vsdF</name>
</gene>
<geneLocation type="plasmid">
    <name>pSDL2</name>
</geneLocation>